<name>PRIS_METHJ</name>
<evidence type="ECO:0000255" key="1">
    <source>
        <dbReference type="HAMAP-Rule" id="MF_00700"/>
    </source>
</evidence>
<protein>
    <recommendedName>
        <fullName evidence="1">DNA primase small subunit PriS</fullName>
        <ecNumber evidence="1">2.7.7.-</ecNumber>
    </recommendedName>
</protein>
<feature type="chain" id="PRO_1000045502" description="DNA primase small subunit PriS">
    <location>
        <begin position="1"/>
        <end position="388"/>
    </location>
</feature>
<feature type="active site" evidence="1">
    <location>
        <position position="100"/>
    </location>
</feature>
<feature type="active site" evidence="1">
    <location>
        <position position="102"/>
    </location>
</feature>
<feature type="active site" evidence="1">
    <location>
        <position position="288"/>
    </location>
</feature>
<sequence>MRPATRIFIKQRFTDYYDKARISPPSSVKEREFGFIFFDDRYPDDIRMRRHIGFSSGDEMQEYVKSLVPAHAYYSTAYYRTPQAPTMGDKEWLGADLIFDLDADHIMRGSYEAMLERIKGEAEKLLDVLDNELGIDMRTIKLVFSGGRGYHVHVQELAFRDFEPAERRELVDYVCGTGISPSLLLHDWKPGRRGWHDRFRLVLTRYLQDLSTRPIKEVKAELSSLRGVGQVMAERFAGMIPELITLLNTNPSSILLRDQTVRTVFGALTSERESTLLPHIREAAVQADEPVTTDTRRLIRLPGSLHAKSGFKVVPMEVKELHDFDPLIDAVAFGEREVIIESEREYSFSLLGSSYDIPKGRLKVPEAVGVFLCCRGMAEIGGVLDHAS</sequence>
<gene>
    <name evidence="1" type="primary">priS</name>
    <name type="synonym">priA</name>
    <name type="ordered locus">Mhun_1132</name>
</gene>
<accession>Q2FPD1</accession>
<proteinExistence type="inferred from homology"/>
<dbReference type="EC" id="2.7.7.-" evidence="1"/>
<dbReference type="EMBL" id="CP000254">
    <property type="protein sequence ID" value="ABD40881.1"/>
    <property type="molecule type" value="Genomic_DNA"/>
</dbReference>
<dbReference type="RefSeq" id="WP_011448159.1">
    <property type="nucleotide sequence ID" value="NC_007796.1"/>
</dbReference>
<dbReference type="SMR" id="Q2FPD1"/>
<dbReference type="FunCoup" id="Q2FPD1">
    <property type="interactions" value="11"/>
</dbReference>
<dbReference type="STRING" id="323259.Mhun_1132"/>
<dbReference type="EnsemblBacteria" id="ABD40881">
    <property type="protein sequence ID" value="ABD40881"/>
    <property type="gene ID" value="Mhun_1132"/>
</dbReference>
<dbReference type="GeneID" id="3922510"/>
<dbReference type="KEGG" id="mhu:Mhun_1132"/>
<dbReference type="eggNOG" id="arCOG04110">
    <property type="taxonomic scope" value="Archaea"/>
</dbReference>
<dbReference type="HOGENOM" id="CLU_056123_1_0_2"/>
<dbReference type="InParanoid" id="Q2FPD1"/>
<dbReference type="OrthoDB" id="31125at2157"/>
<dbReference type="Proteomes" id="UP000001941">
    <property type="component" value="Chromosome"/>
</dbReference>
<dbReference type="GO" id="GO:0000428">
    <property type="term" value="C:DNA-directed RNA polymerase complex"/>
    <property type="evidence" value="ECO:0007669"/>
    <property type="project" value="UniProtKB-KW"/>
</dbReference>
<dbReference type="GO" id="GO:1990077">
    <property type="term" value="C:primosome complex"/>
    <property type="evidence" value="ECO:0007669"/>
    <property type="project" value="UniProtKB-KW"/>
</dbReference>
<dbReference type="GO" id="GO:0003899">
    <property type="term" value="F:DNA-directed RNA polymerase activity"/>
    <property type="evidence" value="ECO:0007669"/>
    <property type="project" value="InterPro"/>
</dbReference>
<dbReference type="GO" id="GO:0046872">
    <property type="term" value="F:metal ion binding"/>
    <property type="evidence" value="ECO:0007669"/>
    <property type="project" value="UniProtKB-KW"/>
</dbReference>
<dbReference type="GO" id="GO:0006269">
    <property type="term" value="P:DNA replication, synthesis of primer"/>
    <property type="evidence" value="ECO:0007669"/>
    <property type="project" value="UniProtKB-UniRule"/>
</dbReference>
<dbReference type="CDD" id="cd04860">
    <property type="entry name" value="AE_Prim_S"/>
    <property type="match status" value="1"/>
</dbReference>
<dbReference type="Gene3D" id="3.90.920.10">
    <property type="entry name" value="DNA primase, PRIM domain"/>
    <property type="match status" value="1"/>
</dbReference>
<dbReference type="HAMAP" id="MF_00700">
    <property type="entry name" value="DNA_primase_sml_arc"/>
    <property type="match status" value="1"/>
</dbReference>
<dbReference type="InterPro" id="IPR002755">
    <property type="entry name" value="DNA_primase_S"/>
</dbReference>
<dbReference type="InterPro" id="IPR014052">
    <property type="entry name" value="DNA_primase_ssu_euk/arc"/>
</dbReference>
<dbReference type="InterPro" id="IPR023639">
    <property type="entry name" value="DNA_primase_ssu_PriS"/>
</dbReference>
<dbReference type="NCBIfam" id="TIGR00335">
    <property type="entry name" value="primase_sml"/>
    <property type="match status" value="1"/>
</dbReference>
<dbReference type="PANTHER" id="PTHR10536">
    <property type="entry name" value="DNA PRIMASE SMALL SUBUNIT"/>
    <property type="match status" value="1"/>
</dbReference>
<dbReference type="Pfam" id="PF01896">
    <property type="entry name" value="DNA_primase_S"/>
    <property type="match status" value="1"/>
</dbReference>
<dbReference type="SUPFAM" id="SSF56747">
    <property type="entry name" value="Prim-pol domain"/>
    <property type="match status" value="1"/>
</dbReference>
<organism>
    <name type="scientific">Methanospirillum hungatei JF-1 (strain ATCC 27890 / DSM 864 / NBRC 100397 / JF-1)</name>
    <dbReference type="NCBI Taxonomy" id="323259"/>
    <lineage>
        <taxon>Archaea</taxon>
        <taxon>Methanobacteriati</taxon>
        <taxon>Methanobacteriota</taxon>
        <taxon>Stenosarchaea group</taxon>
        <taxon>Methanomicrobia</taxon>
        <taxon>Methanomicrobiales</taxon>
        <taxon>Methanospirillaceae</taxon>
        <taxon>Methanospirillum</taxon>
    </lineage>
</organism>
<keyword id="KW-0235">DNA replication</keyword>
<keyword id="KW-0240">DNA-directed RNA polymerase</keyword>
<keyword id="KW-0460">Magnesium</keyword>
<keyword id="KW-0464">Manganese</keyword>
<keyword id="KW-0479">Metal-binding</keyword>
<keyword id="KW-0548">Nucleotidyltransferase</keyword>
<keyword id="KW-0639">Primosome</keyword>
<keyword id="KW-1185">Reference proteome</keyword>
<keyword id="KW-0804">Transcription</keyword>
<keyword id="KW-0808">Transferase</keyword>
<reference key="1">
    <citation type="journal article" date="2016" name="Stand. Genomic Sci.">
        <title>Complete genome sequence of Methanospirillum hungatei type strain JF1.</title>
        <authorList>
            <person name="Gunsalus R.P."/>
            <person name="Cook L.E."/>
            <person name="Crable B."/>
            <person name="Rohlin L."/>
            <person name="McDonald E."/>
            <person name="Mouttaki H."/>
            <person name="Sieber J.R."/>
            <person name="Poweleit N."/>
            <person name="Zhou H."/>
            <person name="Lapidus A.L."/>
            <person name="Daligault H.E."/>
            <person name="Land M."/>
            <person name="Gilna P."/>
            <person name="Ivanova N."/>
            <person name="Kyrpides N."/>
            <person name="Culley D.E."/>
            <person name="McInerney M.J."/>
        </authorList>
    </citation>
    <scope>NUCLEOTIDE SEQUENCE [LARGE SCALE GENOMIC DNA]</scope>
    <source>
        <strain>ATCC 27890 / DSM 864 / NBRC 100397 / JF-1</strain>
    </source>
</reference>
<comment type="function">
    <text evidence="1">Catalytic subunit of DNA primase, an RNA polymerase that catalyzes the synthesis of short RNA molecules used as primers for DNA polymerase during DNA replication. The small subunit contains the primase catalytic core and has DNA synthesis activity on its own. Binding to the large subunit stabilizes and modulates the activity, increasing the rate of DNA synthesis while decreasing the length of the DNA fragments, and conferring RNA synthesis capability. The DNA polymerase activity may enable DNA primase to also catalyze primer extension after primer synthesis. May also play a role in DNA repair.</text>
</comment>
<comment type="cofactor">
    <cofactor evidence="1">
        <name>Mg(2+)</name>
        <dbReference type="ChEBI" id="CHEBI:18420"/>
    </cofactor>
    <cofactor evidence="1">
        <name>Mn(2+)</name>
        <dbReference type="ChEBI" id="CHEBI:29035"/>
    </cofactor>
</comment>
<comment type="subunit">
    <text evidence="1">Heterodimer of a small subunit (PriS) and a large subunit (PriL).</text>
</comment>
<comment type="similarity">
    <text evidence="1">Belongs to the eukaryotic-type primase small subunit family.</text>
</comment>